<gene>
    <name type="primary">OLE5</name>
    <name type="synonym">O5</name>
</gene>
<feature type="initiator methionine" description="Removed" evidence="1">
    <location>
        <position position="1"/>
    </location>
</feature>
<feature type="chain" id="PRO_0000421080" description="Superoxide dismutase [Cu-Zn] 2">
    <location>
        <begin position="2"/>
        <end position="152"/>
    </location>
</feature>
<feature type="binding site" evidence="1">
    <location>
        <position position="45"/>
    </location>
    <ligand>
        <name>Cu cation</name>
        <dbReference type="ChEBI" id="CHEBI:23378"/>
        <note>catalytic</note>
    </ligand>
</feature>
<feature type="binding site" evidence="1">
    <location>
        <position position="47"/>
    </location>
    <ligand>
        <name>Cu cation</name>
        <dbReference type="ChEBI" id="CHEBI:23378"/>
        <note>catalytic</note>
    </ligand>
</feature>
<feature type="binding site" evidence="1">
    <location>
        <position position="62"/>
    </location>
    <ligand>
        <name>Cu cation</name>
        <dbReference type="ChEBI" id="CHEBI:23378"/>
        <note>catalytic</note>
    </ligand>
</feature>
<feature type="binding site" evidence="1">
    <location>
        <position position="62"/>
    </location>
    <ligand>
        <name>Zn(2+)</name>
        <dbReference type="ChEBI" id="CHEBI:29105"/>
        <note>structural</note>
    </ligand>
</feature>
<feature type="binding site" evidence="1">
    <location>
        <position position="70"/>
    </location>
    <ligand>
        <name>Zn(2+)</name>
        <dbReference type="ChEBI" id="CHEBI:29105"/>
        <note>structural</note>
    </ligand>
</feature>
<feature type="binding site" evidence="1">
    <location>
        <position position="79"/>
    </location>
    <ligand>
        <name>Zn(2+)</name>
        <dbReference type="ChEBI" id="CHEBI:29105"/>
        <note>structural</note>
    </ligand>
</feature>
<feature type="binding site" evidence="1">
    <location>
        <position position="82"/>
    </location>
    <ligand>
        <name>Zn(2+)</name>
        <dbReference type="ChEBI" id="CHEBI:29105"/>
        <note>structural</note>
    </ligand>
</feature>
<feature type="binding site" evidence="1">
    <location>
        <position position="119"/>
    </location>
    <ligand>
        <name>Cu cation</name>
        <dbReference type="ChEBI" id="CHEBI:23378"/>
        <note>catalytic</note>
    </ligand>
</feature>
<feature type="glycosylation site" description="N-linked (GlcNAc...) asparagine" evidence="2">
    <location>
        <position position="9"/>
    </location>
</feature>
<feature type="glycosylation site" description="N-linked (GlcNAc...) asparagine" evidence="2">
    <location>
        <position position="33"/>
    </location>
</feature>
<feature type="glycosylation site" description="N-linked (GlcNAc...) asparagine" evidence="2">
    <location>
        <position position="85"/>
    </location>
</feature>
<feature type="disulfide bond" evidence="1">
    <location>
        <begin position="56"/>
        <end position="145"/>
    </location>
</feature>
<feature type="splice variant" id="VSP_045094" description="In isoform 2." evidence="7">
    <location>
        <begin position="84"/>
        <end position="91"/>
    </location>
</feature>
<keyword id="KW-0020">Allergen</keyword>
<keyword id="KW-0025">Alternative splicing</keyword>
<keyword id="KW-0049">Antioxidant</keyword>
<keyword id="KW-0186">Copper</keyword>
<keyword id="KW-0963">Cytoplasm</keyword>
<keyword id="KW-1015">Disulfide bond</keyword>
<keyword id="KW-0256">Endoplasmic reticulum</keyword>
<keyword id="KW-0325">Glycoprotein</keyword>
<keyword id="KW-0479">Metal-binding</keyword>
<keyword id="KW-0560">Oxidoreductase</keyword>
<keyword id="KW-0862">Zinc</keyword>
<organism>
    <name type="scientific">Olea europaea</name>
    <name type="common">Common olive</name>
    <dbReference type="NCBI Taxonomy" id="4146"/>
    <lineage>
        <taxon>Eukaryota</taxon>
        <taxon>Viridiplantae</taxon>
        <taxon>Streptophyta</taxon>
        <taxon>Embryophyta</taxon>
        <taxon>Tracheophyta</taxon>
        <taxon>Spermatophyta</taxon>
        <taxon>Magnoliopsida</taxon>
        <taxon>eudicotyledons</taxon>
        <taxon>Gunneridae</taxon>
        <taxon>Pentapetalae</taxon>
        <taxon>asterids</taxon>
        <taxon>lamiids</taxon>
        <taxon>Lamiales</taxon>
        <taxon>Oleaceae</taxon>
        <taxon>Oleeae</taxon>
        <taxon>Olea</taxon>
    </lineage>
</organism>
<dbReference type="EC" id="1.15.1.1"/>
<dbReference type="EMBL" id="AJ428575">
    <property type="protein sequence ID" value="CAD21706.2"/>
    <property type="molecule type" value="mRNA"/>
</dbReference>
<dbReference type="EMBL" id="EF541380">
    <property type="protein sequence ID" value="ABP58626.1"/>
    <property type="molecule type" value="mRNA"/>
</dbReference>
<dbReference type="EMBL" id="EF541382">
    <property type="protein sequence ID" value="ABP58628.1"/>
    <property type="molecule type" value="mRNA"/>
</dbReference>
<dbReference type="EMBL" id="EF541383">
    <property type="protein sequence ID" value="ABP58629.1"/>
    <property type="molecule type" value="mRNA"/>
</dbReference>
<dbReference type="EMBL" id="EF541384">
    <property type="protein sequence ID" value="ABP58630.1"/>
    <property type="molecule type" value="mRNA"/>
</dbReference>
<dbReference type="EMBL" id="EF541385">
    <property type="protein sequence ID" value="ABP58631.1"/>
    <property type="molecule type" value="mRNA"/>
</dbReference>
<dbReference type="EMBL" id="EU247080">
    <property type="protein sequence ID" value="ABX26133.1"/>
    <property type="molecule type" value="Genomic_DNA"/>
</dbReference>
<dbReference type="EMBL" id="EU247082">
    <property type="protein sequence ID" value="ABX26135.1"/>
    <property type="molecule type" value="Genomic_DNA"/>
</dbReference>
<dbReference type="EMBL" id="EU247083">
    <property type="protein sequence ID" value="ABX26136.1"/>
    <property type="molecule type" value="Genomic_DNA"/>
</dbReference>
<dbReference type="EMBL" id="EU247084">
    <property type="protein sequence ID" value="ABX26137.1"/>
    <property type="molecule type" value="Genomic_DNA"/>
</dbReference>
<dbReference type="EMBL" id="EU247089">
    <property type="protein sequence ID" value="ABX26142.1"/>
    <property type="molecule type" value="Genomic_DNA"/>
</dbReference>
<dbReference type="EMBL" id="EU247091">
    <property type="protein sequence ID" value="ABX26144.1"/>
    <property type="molecule type" value="Genomic_DNA"/>
</dbReference>
<dbReference type="EMBL" id="EU247093">
    <property type="protein sequence ID" value="ABX26146.1"/>
    <property type="molecule type" value="Genomic_DNA"/>
</dbReference>
<dbReference type="EMBL" id="EU247095">
    <property type="protein sequence ID" value="ABX26148.1"/>
    <property type="molecule type" value="Genomic_DNA"/>
</dbReference>
<dbReference type="EMBL" id="EU247096">
    <property type="protein sequence ID" value="ABX26149.1"/>
    <property type="molecule type" value="Genomic_DNA"/>
</dbReference>
<dbReference type="EMBL" id="EU250757">
    <property type="protein sequence ID" value="ABX54839.1"/>
    <property type="molecule type" value="mRNA"/>
</dbReference>
<dbReference type="EMBL" id="EU250758">
    <property type="protein sequence ID" value="ABX54840.1"/>
    <property type="molecule type" value="mRNA"/>
</dbReference>
<dbReference type="EMBL" id="EU250759">
    <property type="protein sequence ID" value="ABX54841.1"/>
    <property type="molecule type" value="mRNA"/>
</dbReference>
<dbReference type="EMBL" id="EU250761">
    <property type="protein sequence ID" value="ABX54843.1"/>
    <property type="molecule type" value="mRNA"/>
</dbReference>
<dbReference type="EMBL" id="EU250764">
    <property type="protein sequence ID" value="ABX54846.1"/>
    <property type="molecule type" value="mRNA"/>
</dbReference>
<dbReference type="EMBL" id="EU250765">
    <property type="protein sequence ID" value="ABX54847.1"/>
    <property type="molecule type" value="mRNA"/>
</dbReference>
<dbReference type="EMBL" id="EU250766">
    <property type="protein sequence ID" value="ABX54848.1"/>
    <property type="molecule type" value="mRNA"/>
</dbReference>
<dbReference type="EMBL" id="EU250768">
    <property type="protein sequence ID" value="ABX54850.1"/>
    <property type="molecule type" value="mRNA"/>
</dbReference>
<dbReference type="EMBL" id="EU250769">
    <property type="protein sequence ID" value="ABX54851.1"/>
    <property type="molecule type" value="mRNA"/>
</dbReference>
<dbReference type="EMBL" id="EU250770">
    <property type="protein sequence ID" value="ABX54852.1"/>
    <property type="molecule type" value="mRNA"/>
</dbReference>
<dbReference type="EMBL" id="EU250771">
    <property type="protein sequence ID" value="ABX54853.1"/>
    <property type="molecule type" value="mRNA"/>
</dbReference>
<dbReference type="EMBL" id="EU250774">
    <property type="protein sequence ID" value="ABX54856.1"/>
    <property type="molecule type" value="mRNA"/>
</dbReference>
<dbReference type="EMBL" id="EU250775">
    <property type="protein sequence ID" value="ABX54857.1"/>
    <property type="molecule type" value="mRNA"/>
</dbReference>
<dbReference type="EMBL" id="EU250776">
    <property type="protein sequence ID" value="ABX54858.1"/>
    <property type="molecule type" value="mRNA"/>
</dbReference>
<dbReference type="EMBL" id="EU250778">
    <property type="protein sequence ID" value="ABX54860.1"/>
    <property type="molecule type" value="mRNA"/>
</dbReference>
<dbReference type="EMBL" id="EU250779">
    <property type="protein sequence ID" value="ABX54861.1"/>
    <property type="molecule type" value="mRNA"/>
</dbReference>
<dbReference type="EMBL" id="EU250781">
    <property type="protein sequence ID" value="ABX54863.1"/>
    <property type="molecule type" value="mRNA"/>
</dbReference>
<dbReference type="EMBL" id="EU250783">
    <property type="protein sequence ID" value="ABX54865.1"/>
    <property type="molecule type" value="mRNA"/>
</dbReference>
<dbReference type="EMBL" id="EU250785">
    <property type="protein sequence ID" value="ABX54867.1"/>
    <property type="molecule type" value="mRNA"/>
</dbReference>
<dbReference type="EMBL" id="EU250786">
    <property type="protein sequence ID" value="ABX54868.1"/>
    <property type="molecule type" value="mRNA"/>
</dbReference>
<dbReference type="EMBL" id="EU250788">
    <property type="protein sequence ID" value="ABX54870.1"/>
    <property type="molecule type" value="mRNA"/>
</dbReference>
<dbReference type="EMBL" id="EU250789">
    <property type="protein sequence ID" value="ABX54871.1"/>
    <property type="molecule type" value="mRNA"/>
</dbReference>
<dbReference type="EMBL" id="EU250790">
    <property type="protein sequence ID" value="ABX54872.1"/>
    <property type="molecule type" value="mRNA"/>
</dbReference>
<dbReference type="EMBL" id="EU250791">
    <property type="protein sequence ID" value="ABX54873.1"/>
    <property type="molecule type" value="mRNA"/>
</dbReference>
<dbReference type="EMBL" id="EU250793">
    <property type="protein sequence ID" value="ABX54875.1"/>
    <property type="molecule type" value="mRNA"/>
</dbReference>
<dbReference type="EMBL" id="EU250797">
    <property type="protein sequence ID" value="ABX54879.1"/>
    <property type="molecule type" value="mRNA"/>
</dbReference>
<dbReference type="SMR" id="Q8L5E0"/>
<dbReference type="Allergome" id="493">
    <property type="allergen name" value="Ole e 5"/>
</dbReference>
<dbReference type="GlyCosmos" id="Q8L5E0">
    <property type="glycosylation" value="3 sites, No reported glycans"/>
</dbReference>
<dbReference type="EnsemblPlants" id="OE9A103554T1">
    <property type="protein sequence ID" value="OE9A103554C1"/>
    <property type="gene ID" value="OE9A103554"/>
</dbReference>
<dbReference type="EnsemblPlants" id="Oeu044798.1">
    <property type="protein sequence ID" value="Oeu044798.1"/>
    <property type="gene ID" value="Oeu044798"/>
</dbReference>
<dbReference type="Gramene" id="OE9A103554T1">
    <property type="protein sequence ID" value="OE9A103554C1"/>
    <property type="gene ID" value="OE9A103554"/>
</dbReference>
<dbReference type="Gramene" id="Oeu044798.1">
    <property type="protein sequence ID" value="Oeu044798.1"/>
    <property type="gene ID" value="Oeu044798"/>
</dbReference>
<dbReference type="GO" id="GO:0005783">
    <property type="term" value="C:endoplasmic reticulum"/>
    <property type="evidence" value="ECO:0007669"/>
    <property type="project" value="UniProtKB-SubCell"/>
</dbReference>
<dbReference type="GO" id="GO:0005507">
    <property type="term" value="F:copper ion binding"/>
    <property type="evidence" value="ECO:0007669"/>
    <property type="project" value="InterPro"/>
</dbReference>
<dbReference type="GO" id="GO:0004784">
    <property type="term" value="F:superoxide dismutase activity"/>
    <property type="evidence" value="ECO:0007669"/>
    <property type="project" value="UniProtKB-EC"/>
</dbReference>
<dbReference type="CDD" id="cd00305">
    <property type="entry name" value="Cu-Zn_Superoxide_Dismutase"/>
    <property type="match status" value="1"/>
</dbReference>
<dbReference type="FunFam" id="2.60.40.200:FF:000001">
    <property type="entry name" value="Superoxide dismutase [Cu-Zn]"/>
    <property type="match status" value="1"/>
</dbReference>
<dbReference type="Gene3D" id="2.60.40.200">
    <property type="entry name" value="Superoxide dismutase, copper/zinc binding domain"/>
    <property type="match status" value="1"/>
</dbReference>
<dbReference type="InterPro" id="IPR036423">
    <property type="entry name" value="SOD-like_Cu/Zn_dom_sf"/>
</dbReference>
<dbReference type="InterPro" id="IPR024134">
    <property type="entry name" value="SOD_Cu/Zn_/chaperone"/>
</dbReference>
<dbReference type="InterPro" id="IPR018152">
    <property type="entry name" value="SOD_Cu/Zn_BS"/>
</dbReference>
<dbReference type="InterPro" id="IPR001424">
    <property type="entry name" value="SOD_Cu_Zn_dom"/>
</dbReference>
<dbReference type="PANTHER" id="PTHR10003">
    <property type="entry name" value="SUPEROXIDE DISMUTASE CU-ZN -RELATED"/>
    <property type="match status" value="1"/>
</dbReference>
<dbReference type="Pfam" id="PF00080">
    <property type="entry name" value="Sod_Cu"/>
    <property type="match status" value="1"/>
</dbReference>
<dbReference type="PRINTS" id="PR00068">
    <property type="entry name" value="CUZNDISMTASE"/>
</dbReference>
<dbReference type="SUPFAM" id="SSF49329">
    <property type="entry name" value="Cu,Zn superoxide dismutase-like"/>
    <property type="match status" value="1"/>
</dbReference>
<dbReference type="PROSITE" id="PS00087">
    <property type="entry name" value="SOD_CU_ZN_1"/>
    <property type="match status" value="1"/>
</dbReference>
<dbReference type="PROSITE" id="PS00332">
    <property type="entry name" value="SOD_CU_ZN_2"/>
    <property type="match status" value="1"/>
</dbReference>
<protein>
    <recommendedName>
        <fullName>Superoxide dismutase [Cu-Zn] 2</fullName>
        <ecNumber>1.15.1.1</ecNumber>
    </recommendedName>
    <alternativeName>
        <fullName>Allergen Ole e V</fullName>
    </alternativeName>
    <allergenName>Ole e 5</allergenName>
</protein>
<name>SODC2_OLEEU</name>
<evidence type="ECO:0000250" key="1"/>
<evidence type="ECO:0000255" key="2"/>
<evidence type="ECO:0000269" key="3">
    <source>
    </source>
</evidence>
<evidence type="ECO:0000269" key="4">
    <source>
    </source>
</evidence>
<evidence type="ECO:0000269" key="5">
    <source>
    </source>
</evidence>
<evidence type="ECO:0000269" key="6">
    <source ref="4"/>
</evidence>
<evidence type="ECO:0000303" key="7">
    <source ref="3"/>
</evidence>
<evidence type="ECO:0000305" key="8"/>
<evidence type="ECO:0000305" key="9">
    <source>
    </source>
</evidence>
<reference key="1">
    <citation type="journal article" date="2005" name="Int. Arch. Allergy Immunol.">
        <title>Cloning and Expression of the Olea europaea allergen Ole e 5, the pollen Cu/Zn superoxide dismutase.</title>
        <authorList>
            <person name="Butteroni C."/>
            <person name="Afferni C."/>
            <person name="Barletta B."/>
            <person name="Iacovacci P."/>
            <person name="Corinti S."/>
            <person name="Brunetto B."/>
            <person name="Tinghino R."/>
            <person name="Ariano R."/>
            <person name="Panzani R.C."/>
            <person name="Pini C."/>
            <person name="Di Felice G."/>
        </authorList>
    </citation>
    <scope>NUCLEOTIDE SEQUENCE [MRNA] (ISOFORM 1)</scope>
    <scope>FUNCTION</scope>
    <scope>CATALYTIC ACTIVITY</scope>
    <scope>ALLERGEN</scope>
    <source>
        <tissue>Pollen</tissue>
    </source>
</reference>
<reference key="2">
    <citation type="submission" date="2007-03" db="EMBL/GenBank/DDBJ databases">
        <title>Isoforms of pollen allergens in two widespread olive cultivars from Iran.</title>
        <authorList>
            <person name="Soleimani A."/>
            <person name="Jimenez-Lopez J.C."/>
            <person name="Rodriguez-Garcia M.I."/>
            <person name="Alche J.D."/>
        </authorList>
    </citation>
    <scope>NUCLEOTIDE SEQUENCE [MRNA] (ISOFORM 1)</scope>
</reference>
<reference key="3">
    <citation type="submission" date="2007-10" db="EMBL/GenBank/DDBJ databases">
        <title>CuZn-SOD polymorphism in olive pollen from different cultivars.</title>
        <authorList>
            <person name="Zafra A."/>
            <person name="Jimenez-Lopez J.C."/>
            <person name="Rodriguez-Garcia M.I."/>
            <person name="Alche J.D."/>
        </authorList>
    </citation>
    <scope>NUCLEOTIDE SEQUENCE [GENOMIC DNA / MRNA] (ISOFORMS 1 AND 2)</scope>
    <source>
        <tissue>Leaf</tissue>
    </source>
</reference>
<reference key="4">
    <citation type="journal article" date="1998" name="Physiol. Plantarum">
        <title>Identification and immunolocalization of superoxide dismutase isoenzymes of olive pollen.</title>
        <authorList>
            <person name="Alche J.D."/>
            <person name="Corpas F.J."/>
            <person name="Rodriguez-Garcia M.I."/>
            <person name="del Rio L.A."/>
        </authorList>
    </citation>
    <scope>FUNCTION</scope>
    <scope>SUBCELLULAR LOCATION</scope>
    <scope>TISSUE SPECIFICITY</scope>
    <scope>ACTIVITY REGULATION</scope>
</reference>
<reference key="5">
    <citation type="journal article" date="2006" name="Plant Cell Physiol.">
        <title>The expression of different superoxide dismutase forms is cell-type dependent in olive (Olea europaea L.) leaves.</title>
        <authorList>
            <person name="Corpas F.J."/>
            <person name="Fernandez-Ocana A."/>
            <person name="Carreras A."/>
            <person name="Valderrama R."/>
            <person name="Luque F."/>
            <person name="Esteban F.J."/>
            <person name="Rodriguez-Serrano M."/>
            <person name="Chaki M."/>
            <person name="Pedrajas J.R."/>
            <person name="Sandalio L.M."/>
            <person name="del Rio L.A."/>
            <person name="Barroso J.B."/>
        </authorList>
    </citation>
    <scope>TISSUE SPECIFICITY</scope>
</reference>
<reference key="6">
    <citation type="journal article" date="2011" name="J. Agric. Food Chem.">
        <title>Identification of olive (Olea europaea) pulp proteins by matrix-assisted laser desorption/ionization time-of-flight mass spectrometry and nano-liquid chromatography tandem mass spectrometry.</title>
        <authorList>
            <person name="Esteve C."/>
            <person name="Canas B."/>
            <person name="Moreno-Gordaliza E."/>
            <person name="Del Rio C."/>
            <person name="Garcia M.C."/>
            <person name="Marina M.L."/>
        </authorList>
    </citation>
    <scope>IDENTIFICATION BY MASS SPECTROMETRY</scope>
    <scope>TISSUE SPECIFICITY</scope>
</reference>
<reference key="7">
    <citation type="journal article" date="2012" name="Talanta">
        <title>Analysis of olive allergens.</title>
        <authorList>
            <person name="Esteve C."/>
            <person name="Montealegre C."/>
            <person name="Marina M.L."/>
            <person name="Garcia M.C."/>
        </authorList>
    </citation>
    <scope>REVIEW</scope>
    <scope>NOMENCLATURE</scope>
</reference>
<accession>Q8L5E0</accession>
<accession>A9LNF9</accession>
<comment type="function">
    <text evidence="3 6">Destroys radicals which are normally produced within the cells and which are toxic to biological systems. Probably involved in the protection against oxidative stress during pollen development.</text>
</comment>
<comment type="catalytic activity">
    <reaction evidence="3">
        <text>2 superoxide + 2 H(+) = H2O2 + O2</text>
        <dbReference type="Rhea" id="RHEA:20696"/>
        <dbReference type="ChEBI" id="CHEBI:15378"/>
        <dbReference type="ChEBI" id="CHEBI:15379"/>
        <dbReference type="ChEBI" id="CHEBI:16240"/>
        <dbReference type="ChEBI" id="CHEBI:18421"/>
        <dbReference type="EC" id="1.15.1.1"/>
    </reaction>
</comment>
<comment type="cofactor">
    <cofactor evidence="1">
        <name>Cu cation</name>
        <dbReference type="ChEBI" id="CHEBI:23378"/>
    </cofactor>
    <text evidence="1">Binds 1 copper ion per subunit.</text>
</comment>
<comment type="cofactor">
    <cofactor evidence="1">
        <name>Zn(2+)</name>
        <dbReference type="ChEBI" id="CHEBI:29105"/>
    </cofactor>
    <text evidence="1">Binds 1 zinc ion per subunit.</text>
</comment>
<comment type="activity regulation">
    <text evidence="6">Inhibited by KCN and H(2)O(2).</text>
</comment>
<comment type="subcellular location">
    <subcellularLocation>
        <location evidence="6">Cytoplasm</location>
    </subcellularLocation>
    <subcellularLocation>
        <location evidence="6">Endoplasmic reticulum</location>
    </subcellularLocation>
</comment>
<comment type="alternative products">
    <event type="alternative splicing"/>
    <isoform>
        <id>Q8L5E0-1</id>
        <name>1</name>
        <sequence type="displayed"/>
    </isoform>
    <isoform>
        <id>Q8L5E0-2</id>
        <name>2</name>
        <sequence type="described" ref="VSP_045094"/>
    </isoform>
</comment>
<comment type="tissue specificity">
    <text evidence="4 5 6">Expressed in fruits, leaves and pollen grains.</text>
</comment>
<comment type="polymorphism">
    <text evidence="9">Several isoforms of the allergen exist due to polymorphism.</text>
</comment>
<comment type="allergen">
    <text evidence="3">Causes an allergic reaction in human. Allergen from olive pollen. Important in Mediterranean countries and California. Its prevalence is related to the geographic area.</text>
</comment>
<comment type="similarity">
    <text evidence="8">Belongs to the Cu-Zn superoxide dismutase family.</text>
</comment>
<proteinExistence type="evidence at protein level"/>
<sequence>MVKAVTVLNSSEGVTGTVYFTQEGDGPTTVTGNLSGLKPGLHGFHVHALGDTTNGCMSTGPHFNPVGKEHGAPGDENRHAGDLGNITVGEDGTAAINIVDKQIPLTGPHSIIGRAVVVHSDPDDLGRGGHELSKSTGNAGGRVACGIIGLQG</sequence>